<accession>Q8GAA0</accession>
<accession>Q31R57</accession>
<proteinExistence type="inferred from homology"/>
<evidence type="ECO:0000255" key="1">
    <source>
        <dbReference type="HAMAP-Rule" id="MF_00315"/>
    </source>
</evidence>
<reference key="1">
    <citation type="submission" date="2002-07" db="EMBL/GenBank/DDBJ databases">
        <title>Synechococcus elongatus PCC 7942 cosmid 3E9.</title>
        <authorList>
            <person name="Holtman C.K."/>
            <person name="Sandoval P."/>
            <person name="Chen Y."/>
            <person name="Socias T."/>
            <person name="Mohler B.J."/>
            <person name="McMurtry S."/>
            <person name="Gonzalez A."/>
            <person name="Salinas I."/>
            <person name="Golden S.S."/>
            <person name="Youderian P."/>
        </authorList>
    </citation>
    <scope>NUCLEOTIDE SEQUENCE [GENOMIC DNA]</scope>
</reference>
<reference key="2">
    <citation type="submission" date="2005-08" db="EMBL/GenBank/DDBJ databases">
        <title>Complete sequence of chromosome 1 of Synechococcus elongatus PCC 7942.</title>
        <authorList>
            <consortium name="US DOE Joint Genome Institute"/>
            <person name="Copeland A."/>
            <person name="Lucas S."/>
            <person name="Lapidus A."/>
            <person name="Barry K."/>
            <person name="Detter J.C."/>
            <person name="Glavina T."/>
            <person name="Hammon N."/>
            <person name="Israni S."/>
            <person name="Pitluck S."/>
            <person name="Schmutz J."/>
            <person name="Larimer F."/>
            <person name="Land M."/>
            <person name="Kyrpides N."/>
            <person name="Lykidis A."/>
            <person name="Golden S."/>
            <person name="Richardson P."/>
        </authorList>
    </citation>
    <scope>NUCLEOTIDE SEQUENCE [LARGE SCALE GENOMIC DNA]</scope>
    <source>
        <strain>ATCC 33912 / PCC 7942 / FACHB-805</strain>
    </source>
</reference>
<protein>
    <recommendedName>
        <fullName evidence="1">1-deoxy-D-xylulose-5-phosphate synthase</fullName>
        <ecNumber evidence="1">2.2.1.7</ecNumber>
    </recommendedName>
    <alternativeName>
        <fullName evidence="1">1-deoxyxylulose-5-phosphate synthase</fullName>
        <shortName evidence="1">DXP synthase</shortName>
        <shortName evidence="1">DXPS</shortName>
    </alternativeName>
</protein>
<name>DXS_SYNE7</name>
<gene>
    <name evidence="1" type="primary">dxs</name>
    <name type="ordered locus">Synpcc7942_0430</name>
    <name type="ORF">sel0040</name>
</gene>
<sequence length="636" mass="68928">MHLSEITHPNQLHGLSVAQLEQIGHQIREKHLQTVAATGGHLGPGLGVVELTLALYQTLDLDRDKVVWDVGHQAYPHKLLTGRYHNFHTLRQKDGIAGYLKRTENRFDHFGAGHASTSISAALGMALARDAQGEDYRCVAVIGDGSLTGGMALEAINHAGHLPKTRLLVVLNDNDMSISPNVGALSRYLNKIRVSEPMQLLTDGLTQGMQQIPFVGGAITQGFEPVKEGMKRLSYSKIGAVFEELGFTYMGPVDGHNLEELIATFREAHKHTGPVLVHVATTKGKGYPYAEEDQVGYHAQNPFDLATGKAKPASKPKPPSYSKVFGQTLTTLAKSDRRIVGITAAMATGTGLDILQKALPKQYIDVGIAEQHAVVLAAGMACDGMRPVVAIYSTFLQRAFDQVIHDVCIQKLPVFFCLDRAGIVGADGPTHQGMYDIAYLRLIPNMVLMAPKDEAELQRMLVTGIEYDGPIAMRFPRGNGIGVPLPEEGWESLPIGKAEQLRQGDDLLMLAYGSMVYPALQTAELLNEHGISATVINARFAKPLDEELIVPLARQIGKVVTFEEGCLPGGFGSAIMESLQAHDLQVPVLPIGVPDLLVEHASPDESKQELGLTPRQMADRILEKFGSRQRIGAASA</sequence>
<feature type="chain" id="PRO_0000189161" description="1-deoxy-D-xylulose-5-phosphate synthase">
    <location>
        <begin position="1"/>
        <end position="636"/>
    </location>
</feature>
<feature type="binding site" evidence="1">
    <location>
        <position position="72"/>
    </location>
    <ligand>
        <name>thiamine diphosphate</name>
        <dbReference type="ChEBI" id="CHEBI:58937"/>
    </ligand>
</feature>
<feature type="binding site" evidence="1">
    <location>
        <begin position="113"/>
        <end position="115"/>
    </location>
    <ligand>
        <name>thiamine diphosphate</name>
        <dbReference type="ChEBI" id="CHEBI:58937"/>
    </ligand>
</feature>
<feature type="binding site" evidence="1">
    <location>
        <position position="144"/>
    </location>
    <ligand>
        <name>Mg(2+)</name>
        <dbReference type="ChEBI" id="CHEBI:18420"/>
    </ligand>
</feature>
<feature type="binding site" evidence="1">
    <location>
        <begin position="145"/>
        <end position="146"/>
    </location>
    <ligand>
        <name>thiamine diphosphate</name>
        <dbReference type="ChEBI" id="CHEBI:58937"/>
    </ligand>
</feature>
<feature type="binding site" evidence="1">
    <location>
        <position position="174"/>
    </location>
    <ligand>
        <name>Mg(2+)</name>
        <dbReference type="ChEBI" id="CHEBI:18420"/>
    </ligand>
</feature>
<feature type="binding site" evidence="1">
    <location>
        <position position="174"/>
    </location>
    <ligand>
        <name>thiamine diphosphate</name>
        <dbReference type="ChEBI" id="CHEBI:58937"/>
    </ligand>
</feature>
<feature type="binding site" evidence="1">
    <location>
        <position position="287"/>
    </location>
    <ligand>
        <name>thiamine diphosphate</name>
        <dbReference type="ChEBI" id="CHEBI:58937"/>
    </ligand>
</feature>
<feature type="binding site" evidence="1">
    <location>
        <position position="370"/>
    </location>
    <ligand>
        <name>thiamine diphosphate</name>
        <dbReference type="ChEBI" id="CHEBI:58937"/>
    </ligand>
</feature>
<comment type="function">
    <text evidence="1">Catalyzes the acyloin condensation reaction between C atoms 2 and 3 of pyruvate and glyceraldehyde 3-phosphate to yield 1-deoxy-D-xylulose-5-phosphate (DXP).</text>
</comment>
<comment type="catalytic activity">
    <reaction evidence="1">
        <text>D-glyceraldehyde 3-phosphate + pyruvate + H(+) = 1-deoxy-D-xylulose 5-phosphate + CO2</text>
        <dbReference type="Rhea" id="RHEA:12605"/>
        <dbReference type="ChEBI" id="CHEBI:15361"/>
        <dbReference type="ChEBI" id="CHEBI:15378"/>
        <dbReference type="ChEBI" id="CHEBI:16526"/>
        <dbReference type="ChEBI" id="CHEBI:57792"/>
        <dbReference type="ChEBI" id="CHEBI:59776"/>
        <dbReference type="EC" id="2.2.1.7"/>
    </reaction>
</comment>
<comment type="cofactor">
    <cofactor evidence="1">
        <name>Mg(2+)</name>
        <dbReference type="ChEBI" id="CHEBI:18420"/>
    </cofactor>
    <text evidence="1">Binds 1 Mg(2+) ion per subunit.</text>
</comment>
<comment type="cofactor">
    <cofactor evidence="1">
        <name>thiamine diphosphate</name>
        <dbReference type="ChEBI" id="CHEBI:58937"/>
    </cofactor>
    <text evidence="1">Binds 1 thiamine pyrophosphate per subunit.</text>
</comment>
<comment type="pathway">
    <text evidence="1">Metabolic intermediate biosynthesis; 1-deoxy-D-xylulose 5-phosphate biosynthesis; 1-deoxy-D-xylulose 5-phosphate from D-glyceraldehyde 3-phosphate and pyruvate: step 1/1.</text>
</comment>
<comment type="subunit">
    <text evidence="1">Homodimer.</text>
</comment>
<comment type="similarity">
    <text evidence="1">Belongs to the transketolase family. DXPS subfamily.</text>
</comment>
<organism>
    <name type="scientific">Synechococcus elongatus (strain ATCC 33912 / PCC 7942 / FACHB-805)</name>
    <name type="common">Anacystis nidulans R2</name>
    <dbReference type="NCBI Taxonomy" id="1140"/>
    <lineage>
        <taxon>Bacteria</taxon>
        <taxon>Bacillati</taxon>
        <taxon>Cyanobacteriota</taxon>
        <taxon>Cyanophyceae</taxon>
        <taxon>Synechococcales</taxon>
        <taxon>Synechococcaceae</taxon>
        <taxon>Synechococcus</taxon>
    </lineage>
</organism>
<keyword id="KW-0414">Isoprene biosynthesis</keyword>
<keyword id="KW-0460">Magnesium</keyword>
<keyword id="KW-0479">Metal-binding</keyword>
<keyword id="KW-1185">Reference proteome</keyword>
<keyword id="KW-0784">Thiamine biosynthesis</keyword>
<keyword id="KW-0786">Thiamine pyrophosphate</keyword>
<keyword id="KW-0808">Transferase</keyword>
<dbReference type="EC" id="2.2.1.7" evidence="1"/>
<dbReference type="EMBL" id="X04616">
    <property type="protein sequence ID" value="CAD55646.1"/>
    <property type="molecule type" value="Genomic_DNA"/>
</dbReference>
<dbReference type="EMBL" id="CP000100">
    <property type="protein sequence ID" value="ABB56462.1"/>
    <property type="molecule type" value="Genomic_DNA"/>
</dbReference>
<dbReference type="RefSeq" id="WP_011377576.1">
    <property type="nucleotide sequence ID" value="NZ_JACJTX010000002.1"/>
</dbReference>
<dbReference type="SMR" id="Q8GAA0"/>
<dbReference type="STRING" id="1140.Synpcc7942_0430"/>
<dbReference type="PaxDb" id="1140-Synpcc7942_0430"/>
<dbReference type="GeneID" id="72429250"/>
<dbReference type="KEGG" id="syf:Synpcc7942_0430"/>
<dbReference type="eggNOG" id="COG1154">
    <property type="taxonomic scope" value="Bacteria"/>
</dbReference>
<dbReference type="HOGENOM" id="CLU_009227_1_4_3"/>
<dbReference type="OrthoDB" id="9803371at2"/>
<dbReference type="BioCyc" id="SYNEL:SYNPCC7942_0430-MONOMER"/>
<dbReference type="UniPathway" id="UPA00064">
    <property type="reaction ID" value="UER00091"/>
</dbReference>
<dbReference type="Proteomes" id="UP000889800">
    <property type="component" value="Chromosome"/>
</dbReference>
<dbReference type="GO" id="GO:0005829">
    <property type="term" value="C:cytosol"/>
    <property type="evidence" value="ECO:0007669"/>
    <property type="project" value="TreeGrafter"/>
</dbReference>
<dbReference type="GO" id="GO:0008661">
    <property type="term" value="F:1-deoxy-D-xylulose-5-phosphate synthase activity"/>
    <property type="evidence" value="ECO:0007669"/>
    <property type="project" value="UniProtKB-UniRule"/>
</dbReference>
<dbReference type="GO" id="GO:0000287">
    <property type="term" value="F:magnesium ion binding"/>
    <property type="evidence" value="ECO:0007669"/>
    <property type="project" value="UniProtKB-UniRule"/>
</dbReference>
<dbReference type="GO" id="GO:0030976">
    <property type="term" value="F:thiamine pyrophosphate binding"/>
    <property type="evidence" value="ECO:0007669"/>
    <property type="project" value="UniProtKB-UniRule"/>
</dbReference>
<dbReference type="GO" id="GO:0052865">
    <property type="term" value="P:1-deoxy-D-xylulose 5-phosphate biosynthetic process"/>
    <property type="evidence" value="ECO:0007669"/>
    <property type="project" value="UniProtKB-UniPathway"/>
</dbReference>
<dbReference type="GO" id="GO:0019288">
    <property type="term" value="P:isopentenyl diphosphate biosynthetic process, methylerythritol 4-phosphate pathway"/>
    <property type="evidence" value="ECO:0007669"/>
    <property type="project" value="TreeGrafter"/>
</dbReference>
<dbReference type="GO" id="GO:0016114">
    <property type="term" value="P:terpenoid biosynthetic process"/>
    <property type="evidence" value="ECO:0007669"/>
    <property type="project" value="UniProtKB-UniRule"/>
</dbReference>
<dbReference type="GO" id="GO:0009228">
    <property type="term" value="P:thiamine biosynthetic process"/>
    <property type="evidence" value="ECO:0007669"/>
    <property type="project" value="UniProtKB-UniRule"/>
</dbReference>
<dbReference type="CDD" id="cd02007">
    <property type="entry name" value="TPP_DXS"/>
    <property type="match status" value="1"/>
</dbReference>
<dbReference type="CDD" id="cd07033">
    <property type="entry name" value="TPP_PYR_DXS_TK_like"/>
    <property type="match status" value="1"/>
</dbReference>
<dbReference type="FunFam" id="3.40.50.920:FF:000002">
    <property type="entry name" value="1-deoxy-D-xylulose-5-phosphate synthase"/>
    <property type="match status" value="1"/>
</dbReference>
<dbReference type="FunFam" id="3.40.50.970:FF:000005">
    <property type="entry name" value="1-deoxy-D-xylulose-5-phosphate synthase"/>
    <property type="match status" value="1"/>
</dbReference>
<dbReference type="Gene3D" id="3.40.50.920">
    <property type="match status" value="1"/>
</dbReference>
<dbReference type="Gene3D" id="3.40.50.970">
    <property type="match status" value="2"/>
</dbReference>
<dbReference type="HAMAP" id="MF_00315">
    <property type="entry name" value="DXP_synth"/>
    <property type="match status" value="1"/>
</dbReference>
<dbReference type="InterPro" id="IPR005477">
    <property type="entry name" value="Dxylulose-5-P_synthase"/>
</dbReference>
<dbReference type="InterPro" id="IPR029061">
    <property type="entry name" value="THDP-binding"/>
</dbReference>
<dbReference type="InterPro" id="IPR009014">
    <property type="entry name" value="Transketo_C/PFOR_II"/>
</dbReference>
<dbReference type="InterPro" id="IPR005475">
    <property type="entry name" value="Transketolase-like_Pyr-bd"/>
</dbReference>
<dbReference type="InterPro" id="IPR020826">
    <property type="entry name" value="Transketolase_BS"/>
</dbReference>
<dbReference type="InterPro" id="IPR033248">
    <property type="entry name" value="Transketolase_C"/>
</dbReference>
<dbReference type="InterPro" id="IPR049557">
    <property type="entry name" value="Transketolase_CS"/>
</dbReference>
<dbReference type="NCBIfam" id="TIGR00204">
    <property type="entry name" value="dxs"/>
    <property type="match status" value="1"/>
</dbReference>
<dbReference type="NCBIfam" id="NF003933">
    <property type="entry name" value="PRK05444.2-2"/>
    <property type="match status" value="1"/>
</dbReference>
<dbReference type="PANTHER" id="PTHR43322">
    <property type="entry name" value="1-D-DEOXYXYLULOSE 5-PHOSPHATE SYNTHASE-RELATED"/>
    <property type="match status" value="1"/>
</dbReference>
<dbReference type="PANTHER" id="PTHR43322:SF5">
    <property type="entry name" value="1-DEOXY-D-XYLULOSE-5-PHOSPHATE SYNTHASE, CHLOROPLASTIC"/>
    <property type="match status" value="1"/>
</dbReference>
<dbReference type="Pfam" id="PF13292">
    <property type="entry name" value="DXP_synthase_N"/>
    <property type="match status" value="1"/>
</dbReference>
<dbReference type="Pfam" id="PF02779">
    <property type="entry name" value="Transket_pyr"/>
    <property type="match status" value="1"/>
</dbReference>
<dbReference type="Pfam" id="PF02780">
    <property type="entry name" value="Transketolase_C"/>
    <property type="match status" value="1"/>
</dbReference>
<dbReference type="SMART" id="SM00861">
    <property type="entry name" value="Transket_pyr"/>
    <property type="match status" value="1"/>
</dbReference>
<dbReference type="SUPFAM" id="SSF52518">
    <property type="entry name" value="Thiamin diphosphate-binding fold (THDP-binding)"/>
    <property type="match status" value="2"/>
</dbReference>
<dbReference type="SUPFAM" id="SSF52922">
    <property type="entry name" value="TK C-terminal domain-like"/>
    <property type="match status" value="1"/>
</dbReference>
<dbReference type="PROSITE" id="PS00801">
    <property type="entry name" value="TRANSKETOLASE_1"/>
    <property type="match status" value="1"/>
</dbReference>
<dbReference type="PROSITE" id="PS00802">
    <property type="entry name" value="TRANSKETOLASE_2"/>
    <property type="match status" value="1"/>
</dbReference>